<reference key="1">
    <citation type="journal article" date="2006" name="Proc. Natl. Acad. Sci. U.S.A.">
        <title>The complete genome sequence of a chronic atrophic gastritis Helicobacter pylori strain: evolution during disease progression.</title>
        <authorList>
            <person name="Oh J.D."/>
            <person name="Kling-Baeckhed H."/>
            <person name="Giannakis M."/>
            <person name="Xu J."/>
            <person name="Fulton R.S."/>
            <person name="Fulton L.A."/>
            <person name="Cordum H.S."/>
            <person name="Wang C."/>
            <person name="Elliott G."/>
            <person name="Edwards J."/>
            <person name="Mardis E.R."/>
            <person name="Engstrand L.G."/>
            <person name="Gordon J.I."/>
        </authorList>
    </citation>
    <scope>NUCLEOTIDE SEQUENCE [LARGE SCALE GENOMIC DNA]</scope>
    <source>
        <strain>HPAG1</strain>
    </source>
</reference>
<organism>
    <name type="scientific">Helicobacter pylori (strain HPAG1)</name>
    <dbReference type="NCBI Taxonomy" id="357544"/>
    <lineage>
        <taxon>Bacteria</taxon>
        <taxon>Pseudomonadati</taxon>
        <taxon>Campylobacterota</taxon>
        <taxon>Epsilonproteobacteria</taxon>
        <taxon>Campylobacterales</taxon>
        <taxon>Helicobacteraceae</taxon>
        <taxon>Helicobacter</taxon>
    </lineage>
</organism>
<protein>
    <recommendedName>
        <fullName evidence="1">GMP synthase [glutamine-hydrolyzing]</fullName>
        <ecNumber evidence="1">6.3.5.2</ecNumber>
    </recommendedName>
    <alternativeName>
        <fullName evidence="1">GMP synthetase</fullName>
    </alternativeName>
    <alternativeName>
        <fullName evidence="1">Glutamine amidotransferase</fullName>
    </alternativeName>
</protein>
<sequence>MILVLDFGSQYTQLIARRLRESGIYAEIVPFFESIENIQKKAPKGLILSGGPASVYAKDAYKPSEKIFDLNVPILGICYGMQYLVDFFGGVVAGANEQEFGKAVLEITQDSVIFEGVKTKSLVWMSHMDKVIELPKGFITLAKSPNSPHCAIENGKIFGLQFHPEVIQSEEGGKILENFALLVCDCEKTWGMQHFAQREIARLKEKIANDKVLCAVSGGVDSTVVATLLYRAIKDNLIAVFVDHGLLRKNEKERVQAMFKDLQIPLNTIDAKGIFLSKLKGVSEPELKRKIIGETFIEVFEKEAKKHHLKGKIEFLAQGTLYPDVIESVSVKGPSKVIKTHHNVGGLPEWMDFKLIEPLRELFKDEARLLGKELGISQDFLMRHPFPGPGLAVRILGEVSESKIKRLQEADFIFIEELKKANLYDKVWQAFCVLLNVNSVGVMGDNRTYENAICLRAVNASDGMTASFSFLEHSFLEKVSNRITNEVSGINRVVYDITSKPPGTIEWE</sequence>
<name>GUAA_HELPH</name>
<gene>
    <name evidence="1" type="primary">guaA</name>
    <name type="ordered locus">HPAG1_0983</name>
</gene>
<proteinExistence type="inferred from homology"/>
<evidence type="ECO:0000255" key="1">
    <source>
        <dbReference type="HAMAP-Rule" id="MF_00344"/>
    </source>
</evidence>
<keyword id="KW-0067">ATP-binding</keyword>
<keyword id="KW-0315">Glutamine amidotransferase</keyword>
<keyword id="KW-0332">GMP biosynthesis</keyword>
<keyword id="KW-0436">Ligase</keyword>
<keyword id="KW-0547">Nucleotide-binding</keyword>
<keyword id="KW-0658">Purine biosynthesis</keyword>
<comment type="function">
    <text evidence="1">Catalyzes the synthesis of GMP from XMP.</text>
</comment>
<comment type="catalytic activity">
    <reaction evidence="1">
        <text>XMP + L-glutamine + ATP + H2O = GMP + L-glutamate + AMP + diphosphate + 2 H(+)</text>
        <dbReference type="Rhea" id="RHEA:11680"/>
        <dbReference type="ChEBI" id="CHEBI:15377"/>
        <dbReference type="ChEBI" id="CHEBI:15378"/>
        <dbReference type="ChEBI" id="CHEBI:29985"/>
        <dbReference type="ChEBI" id="CHEBI:30616"/>
        <dbReference type="ChEBI" id="CHEBI:33019"/>
        <dbReference type="ChEBI" id="CHEBI:57464"/>
        <dbReference type="ChEBI" id="CHEBI:58115"/>
        <dbReference type="ChEBI" id="CHEBI:58359"/>
        <dbReference type="ChEBI" id="CHEBI:456215"/>
        <dbReference type="EC" id="6.3.5.2"/>
    </reaction>
</comment>
<comment type="pathway">
    <text evidence="1">Purine metabolism; GMP biosynthesis; GMP from XMP (L-Gln route): step 1/1.</text>
</comment>
<comment type="subunit">
    <text evidence="1">Homodimer.</text>
</comment>
<accession>Q1CSM2</accession>
<feature type="chain" id="PRO_1000120318" description="GMP synthase [glutamine-hydrolyzing]">
    <location>
        <begin position="1"/>
        <end position="508"/>
    </location>
</feature>
<feature type="domain" description="Glutamine amidotransferase type-1" evidence="1">
    <location>
        <begin position="1"/>
        <end position="189"/>
    </location>
</feature>
<feature type="domain" description="GMPS ATP-PPase" evidence="1">
    <location>
        <begin position="190"/>
        <end position="383"/>
    </location>
</feature>
<feature type="active site" description="Nucleophile" evidence="1">
    <location>
        <position position="78"/>
    </location>
</feature>
<feature type="active site" evidence="1">
    <location>
        <position position="163"/>
    </location>
</feature>
<feature type="active site" evidence="1">
    <location>
        <position position="165"/>
    </location>
</feature>
<feature type="binding site" evidence="1">
    <location>
        <begin position="217"/>
        <end position="223"/>
    </location>
    <ligand>
        <name>ATP</name>
        <dbReference type="ChEBI" id="CHEBI:30616"/>
    </ligand>
</feature>
<dbReference type="EC" id="6.3.5.2" evidence="1"/>
<dbReference type="EMBL" id="CP000241">
    <property type="protein sequence ID" value="ABF85050.1"/>
    <property type="molecule type" value="Genomic_DNA"/>
</dbReference>
<dbReference type="RefSeq" id="WP_000604629.1">
    <property type="nucleotide sequence ID" value="NC_008086.1"/>
</dbReference>
<dbReference type="SMR" id="Q1CSM2"/>
<dbReference type="MEROPS" id="C26.957"/>
<dbReference type="KEGG" id="hpa:HPAG1_0983"/>
<dbReference type="HOGENOM" id="CLU_014340_0_5_7"/>
<dbReference type="UniPathway" id="UPA00189">
    <property type="reaction ID" value="UER00296"/>
</dbReference>
<dbReference type="GO" id="GO:0005829">
    <property type="term" value="C:cytosol"/>
    <property type="evidence" value="ECO:0007669"/>
    <property type="project" value="TreeGrafter"/>
</dbReference>
<dbReference type="GO" id="GO:0005524">
    <property type="term" value="F:ATP binding"/>
    <property type="evidence" value="ECO:0007669"/>
    <property type="project" value="UniProtKB-UniRule"/>
</dbReference>
<dbReference type="GO" id="GO:0003921">
    <property type="term" value="F:GMP synthase activity"/>
    <property type="evidence" value="ECO:0007669"/>
    <property type="project" value="InterPro"/>
</dbReference>
<dbReference type="CDD" id="cd01742">
    <property type="entry name" value="GATase1_GMP_Synthase"/>
    <property type="match status" value="1"/>
</dbReference>
<dbReference type="CDD" id="cd01997">
    <property type="entry name" value="GMP_synthase_C"/>
    <property type="match status" value="1"/>
</dbReference>
<dbReference type="FunFam" id="3.30.300.10:FF:000002">
    <property type="entry name" value="GMP synthase [glutamine-hydrolyzing]"/>
    <property type="match status" value="1"/>
</dbReference>
<dbReference type="FunFam" id="3.40.50.620:FF:000001">
    <property type="entry name" value="GMP synthase [glutamine-hydrolyzing]"/>
    <property type="match status" value="1"/>
</dbReference>
<dbReference type="FunFam" id="3.40.50.880:FF:000001">
    <property type="entry name" value="GMP synthase [glutamine-hydrolyzing]"/>
    <property type="match status" value="1"/>
</dbReference>
<dbReference type="Gene3D" id="3.30.300.10">
    <property type="match status" value="1"/>
</dbReference>
<dbReference type="Gene3D" id="3.40.50.880">
    <property type="match status" value="1"/>
</dbReference>
<dbReference type="Gene3D" id="3.40.50.620">
    <property type="entry name" value="HUPs"/>
    <property type="match status" value="1"/>
</dbReference>
<dbReference type="HAMAP" id="MF_00344">
    <property type="entry name" value="GMP_synthase"/>
    <property type="match status" value="1"/>
</dbReference>
<dbReference type="InterPro" id="IPR029062">
    <property type="entry name" value="Class_I_gatase-like"/>
</dbReference>
<dbReference type="InterPro" id="IPR017926">
    <property type="entry name" value="GATASE"/>
</dbReference>
<dbReference type="InterPro" id="IPR001674">
    <property type="entry name" value="GMP_synth_C"/>
</dbReference>
<dbReference type="InterPro" id="IPR004739">
    <property type="entry name" value="GMP_synth_GATase"/>
</dbReference>
<dbReference type="InterPro" id="IPR022955">
    <property type="entry name" value="GMP_synthase"/>
</dbReference>
<dbReference type="InterPro" id="IPR025777">
    <property type="entry name" value="GMPS_ATP_PPase_dom"/>
</dbReference>
<dbReference type="InterPro" id="IPR022310">
    <property type="entry name" value="NAD/GMP_synthase"/>
</dbReference>
<dbReference type="InterPro" id="IPR014729">
    <property type="entry name" value="Rossmann-like_a/b/a_fold"/>
</dbReference>
<dbReference type="NCBIfam" id="TIGR00884">
    <property type="entry name" value="guaA_Cterm"/>
    <property type="match status" value="1"/>
</dbReference>
<dbReference type="NCBIfam" id="TIGR00888">
    <property type="entry name" value="guaA_Nterm"/>
    <property type="match status" value="1"/>
</dbReference>
<dbReference type="NCBIfam" id="NF000848">
    <property type="entry name" value="PRK00074.1"/>
    <property type="match status" value="1"/>
</dbReference>
<dbReference type="PANTHER" id="PTHR11922:SF2">
    <property type="entry name" value="GMP SYNTHASE [GLUTAMINE-HYDROLYZING]"/>
    <property type="match status" value="1"/>
</dbReference>
<dbReference type="PANTHER" id="PTHR11922">
    <property type="entry name" value="GMP SYNTHASE-RELATED"/>
    <property type="match status" value="1"/>
</dbReference>
<dbReference type="Pfam" id="PF00117">
    <property type="entry name" value="GATase"/>
    <property type="match status" value="1"/>
</dbReference>
<dbReference type="Pfam" id="PF00958">
    <property type="entry name" value="GMP_synt_C"/>
    <property type="match status" value="1"/>
</dbReference>
<dbReference type="Pfam" id="PF02540">
    <property type="entry name" value="NAD_synthase"/>
    <property type="match status" value="1"/>
</dbReference>
<dbReference type="PRINTS" id="PR00097">
    <property type="entry name" value="ANTSNTHASEII"/>
</dbReference>
<dbReference type="PRINTS" id="PR00096">
    <property type="entry name" value="GATASE"/>
</dbReference>
<dbReference type="SUPFAM" id="SSF52402">
    <property type="entry name" value="Adenine nucleotide alpha hydrolases-like"/>
    <property type="match status" value="1"/>
</dbReference>
<dbReference type="SUPFAM" id="SSF52317">
    <property type="entry name" value="Class I glutamine amidotransferase-like"/>
    <property type="match status" value="1"/>
</dbReference>
<dbReference type="SUPFAM" id="SSF54810">
    <property type="entry name" value="GMP synthetase C-terminal dimerisation domain"/>
    <property type="match status" value="1"/>
</dbReference>
<dbReference type="PROSITE" id="PS51273">
    <property type="entry name" value="GATASE_TYPE_1"/>
    <property type="match status" value="1"/>
</dbReference>
<dbReference type="PROSITE" id="PS51553">
    <property type="entry name" value="GMPS_ATP_PPASE"/>
    <property type="match status" value="1"/>
</dbReference>